<protein>
    <recommendedName>
        <fullName evidence="7">Octanoyltransferase LIP2, mitochondrial</fullName>
        <ecNumber evidence="3 4">2.3.1.181</ecNumber>
    </recommendedName>
    <alternativeName>
        <fullName evidence="7">Lipoate biosynthesis protein</fullName>
    </alternativeName>
    <alternativeName>
        <fullName evidence="7">Lipoate-protein ligase</fullName>
    </alternativeName>
    <alternativeName>
        <fullName evidence="7">Lipoyl ligase</fullName>
    </alternativeName>
    <alternativeName>
        <fullName evidence="7">Lipoyl/octanoyl transferase</fullName>
    </alternativeName>
    <alternativeName>
        <fullName evidence="7">Octanoyl-[acyl-carrier-protein]-protein N-octanoyltransferase</fullName>
    </alternativeName>
</protein>
<keyword id="KW-0012">Acyltransferase</keyword>
<keyword id="KW-0496">Mitochondrion</keyword>
<keyword id="KW-1185">Reference proteome</keyword>
<keyword id="KW-0808">Transferase</keyword>
<keyword id="KW-0809">Transit peptide</keyword>
<accession>Q9SXP7</accession>
<accession>O23021</accession>
<comment type="function">
    <text evidence="3 4 5">Catalyzes the transfer of endogenously produced octanoic acid from octanoyl-acyl-carrier-protein onto the lipoyl domains of lipoate-dependent enzymes. Lipoyl-ACP can also act as a substrate although octanoyl-ACP is likely to be the physiological substrate (By similarity) (PubMed:11427685). Together with LIP1 is essential for mitochondrial protein lipoylation during seed development. Required for the lipoylation of mitochondrial 2-oxoglutarate dehydrogenase component E2 proteins in leaves and roots (PubMed:24872381).</text>
</comment>
<comment type="catalytic activity">
    <reaction evidence="3 4">
        <text>octanoyl-[ACP] + L-lysyl-[protein] = N(6)-octanoyl-L-lysyl-[protein] + holo-[ACP] + H(+)</text>
        <dbReference type="Rhea" id="RHEA:17665"/>
        <dbReference type="Rhea" id="RHEA-COMP:9636"/>
        <dbReference type="Rhea" id="RHEA-COMP:9685"/>
        <dbReference type="Rhea" id="RHEA-COMP:9752"/>
        <dbReference type="Rhea" id="RHEA-COMP:9928"/>
        <dbReference type="ChEBI" id="CHEBI:15378"/>
        <dbReference type="ChEBI" id="CHEBI:29969"/>
        <dbReference type="ChEBI" id="CHEBI:64479"/>
        <dbReference type="ChEBI" id="CHEBI:78463"/>
        <dbReference type="ChEBI" id="CHEBI:78809"/>
        <dbReference type="EC" id="2.3.1.181"/>
    </reaction>
</comment>
<comment type="pathway">
    <text evidence="3">Protein modification; protein lipoylation via endogenous pathway; protein N(6)-(lipoyl)lysine from octanoyl-[acyl-carrier-protein]: step 1/2.</text>
</comment>
<comment type="subcellular location">
    <subcellularLocation>
        <location evidence="5">Mitochondrion</location>
    </subcellularLocation>
</comment>
<comment type="tissue specificity">
    <text evidence="4 5">Expressed in leaves (PubMed:11427685). Expressed in roots, rosette leaves, cauline leaves, stems and siliques (PubMed:24872381).</text>
</comment>
<comment type="disruption phenotype">
    <text evidence="5">Embryonic lethality.</text>
</comment>
<comment type="miscellaneous">
    <text evidence="3">In the reaction, the free carboxyl group of octanoic acid is attached via an amide linkage to the epsilon-amino group of a specific lysine residue of lipoyl domains of lipoate-dependent enzymes.</text>
</comment>
<comment type="similarity">
    <text evidence="3">Belongs to the LipB family.</text>
</comment>
<comment type="sequence caution" evidence="7">
    <conflict type="erroneous gene model prediction">
        <sequence resource="EMBL-CDS" id="AAB80636"/>
    </conflict>
    <text>The predicted gene At1g04640 has been split into 2 genes: At1g04635 and At1g04640.</text>
</comment>
<feature type="transit peptide" description="Mitochondrion" evidence="2">
    <location>
        <begin position="1"/>
        <end position="32"/>
    </location>
</feature>
<feature type="chain" id="PRO_0000062907" description="Octanoyltransferase LIP2, mitochondrial">
    <location>
        <begin position="33"/>
        <end position="235"/>
    </location>
</feature>
<feature type="domain" description="BPL/LPL catalytic" evidence="3">
    <location>
        <begin position="34"/>
        <end position="218"/>
    </location>
</feature>
<feature type="active site" description="Acyl-thioester intermediate" evidence="1">
    <location>
        <position position="178"/>
    </location>
</feature>
<feature type="binding site" evidence="3">
    <location>
        <begin position="79"/>
        <end position="86"/>
    </location>
    <ligand>
        <name>substrate</name>
    </ligand>
</feature>
<feature type="binding site" evidence="3">
    <location>
        <begin position="147"/>
        <end position="149"/>
    </location>
    <ligand>
        <name>substrate</name>
    </ligand>
</feature>
<feature type="binding site" evidence="3">
    <location>
        <begin position="160"/>
        <end position="162"/>
    </location>
    <ligand>
        <name>substrate</name>
    </ligand>
</feature>
<feature type="site" description="Lowers pKa of active site Cys" evidence="3">
    <location>
        <position position="144"/>
    </location>
</feature>
<organism>
    <name type="scientific">Arabidopsis thaliana</name>
    <name type="common">Mouse-ear cress</name>
    <dbReference type="NCBI Taxonomy" id="3702"/>
    <lineage>
        <taxon>Eukaryota</taxon>
        <taxon>Viridiplantae</taxon>
        <taxon>Streptophyta</taxon>
        <taxon>Embryophyta</taxon>
        <taxon>Tracheophyta</taxon>
        <taxon>Spermatophyta</taxon>
        <taxon>Magnoliopsida</taxon>
        <taxon>eudicotyledons</taxon>
        <taxon>Gunneridae</taxon>
        <taxon>Pentapetalae</taxon>
        <taxon>rosids</taxon>
        <taxon>malvids</taxon>
        <taxon>Brassicales</taxon>
        <taxon>Brassicaceae</taxon>
        <taxon>Camelineae</taxon>
        <taxon>Arabidopsis</taxon>
    </lineage>
</organism>
<sequence length="235" mass="26421">MRSPRTLEVWKLGTVNYLKSLKLQEKLVSERKAHQIPDTLLSLQHPPTYTLGKRRTDHNLLIPESELTKIGAELHYTQRGGDITFHGPHQAILYPIISLRSIGFGARNYVETLERSMIEFASIYGVKARAGNKCETGVWVGDRKIGAIGVRISSGITSHGLALNIDPDMKYFEHIVPCGIADKEVTSLRRETDTLLPSEEVIHEQLVSCLAKAFSYDDVVWKEDPSLILDTQDKE</sequence>
<evidence type="ECO:0000250" key="1">
    <source>
        <dbReference type="UniProtKB" id="P60720"/>
    </source>
</evidence>
<evidence type="ECO:0000255" key="2"/>
<evidence type="ECO:0000255" key="3">
    <source>
        <dbReference type="HAMAP-Rule" id="MF_00013"/>
    </source>
</evidence>
<evidence type="ECO:0000269" key="4">
    <source>
    </source>
</evidence>
<evidence type="ECO:0000269" key="5">
    <source>
    </source>
</evidence>
<evidence type="ECO:0000303" key="6">
    <source>
    </source>
</evidence>
<evidence type="ECO:0000305" key="7"/>
<evidence type="ECO:0000312" key="8">
    <source>
        <dbReference type="Araport" id="AT1G04640"/>
    </source>
</evidence>
<evidence type="ECO:0000312" key="9">
    <source>
        <dbReference type="EMBL" id="AAB80636.1"/>
    </source>
</evidence>
<gene>
    <name evidence="6" type="primary">LIP2</name>
    <name evidence="8" type="ordered locus">At1g04640</name>
    <name evidence="9" type="ORF">T1G11.11</name>
</gene>
<name>LIP2M_ARATH</name>
<dbReference type="EC" id="2.3.1.181" evidence="3 4"/>
<dbReference type="EMBL" id="AB020975">
    <property type="protein sequence ID" value="BAA78386.1"/>
    <property type="molecule type" value="mRNA"/>
</dbReference>
<dbReference type="EMBL" id="AC002376">
    <property type="protein sequence ID" value="AAB80636.1"/>
    <property type="status" value="ALT_SEQ"/>
    <property type="molecule type" value="Genomic_DNA"/>
</dbReference>
<dbReference type="EMBL" id="CP002684">
    <property type="protein sequence ID" value="AEE27726.1"/>
    <property type="molecule type" value="Genomic_DNA"/>
</dbReference>
<dbReference type="EMBL" id="CP002684">
    <property type="protein sequence ID" value="AEE27727.1"/>
    <property type="molecule type" value="Genomic_DNA"/>
</dbReference>
<dbReference type="EMBL" id="AF428288">
    <property type="protein sequence ID" value="AAL16120.1"/>
    <property type="molecule type" value="mRNA"/>
</dbReference>
<dbReference type="EMBL" id="AY133628">
    <property type="protein sequence ID" value="AAM91458.1"/>
    <property type="molecule type" value="mRNA"/>
</dbReference>
<dbReference type="PIR" id="B86179">
    <property type="entry name" value="B86179"/>
</dbReference>
<dbReference type="RefSeq" id="NP_001030961.1">
    <property type="nucleotide sequence ID" value="NM_001035884.2"/>
</dbReference>
<dbReference type="RefSeq" id="NP_171958.1">
    <property type="nucleotide sequence ID" value="NM_100343.3"/>
</dbReference>
<dbReference type="SMR" id="Q9SXP7"/>
<dbReference type="FunCoup" id="Q9SXP7">
    <property type="interactions" value="2414"/>
</dbReference>
<dbReference type="STRING" id="3702.Q9SXP7"/>
<dbReference type="iPTMnet" id="Q9SXP7"/>
<dbReference type="SwissPalm" id="Q9SXP7"/>
<dbReference type="PaxDb" id="3702-AT1G04640.2"/>
<dbReference type="ProteomicsDB" id="238659"/>
<dbReference type="EnsemblPlants" id="AT1G04640.1">
    <property type="protein sequence ID" value="AT1G04640.1"/>
    <property type="gene ID" value="AT1G04640"/>
</dbReference>
<dbReference type="EnsemblPlants" id="AT1G04640.2">
    <property type="protein sequence ID" value="AT1G04640.2"/>
    <property type="gene ID" value="AT1G04640"/>
</dbReference>
<dbReference type="GeneID" id="839462"/>
<dbReference type="Gramene" id="AT1G04640.1">
    <property type="protein sequence ID" value="AT1G04640.1"/>
    <property type="gene ID" value="AT1G04640"/>
</dbReference>
<dbReference type="Gramene" id="AT1G04640.2">
    <property type="protein sequence ID" value="AT1G04640.2"/>
    <property type="gene ID" value="AT1G04640"/>
</dbReference>
<dbReference type="KEGG" id="ath:AT1G04640"/>
<dbReference type="Araport" id="AT1G04640"/>
<dbReference type="TAIR" id="AT1G04640">
    <property type="gene designation" value="LIP2"/>
</dbReference>
<dbReference type="eggNOG" id="KOG0325">
    <property type="taxonomic scope" value="Eukaryota"/>
</dbReference>
<dbReference type="HOGENOM" id="CLU_035168_1_1_1"/>
<dbReference type="InParanoid" id="Q9SXP7"/>
<dbReference type="OMA" id="GEVTYHC"/>
<dbReference type="OrthoDB" id="19908at2759"/>
<dbReference type="PhylomeDB" id="Q9SXP7"/>
<dbReference type="BioCyc" id="ARA:AT1G04640-MONOMER"/>
<dbReference type="BRENDA" id="2.3.1.181">
    <property type="organism ID" value="399"/>
</dbReference>
<dbReference type="UniPathway" id="UPA00538">
    <property type="reaction ID" value="UER00592"/>
</dbReference>
<dbReference type="PRO" id="PR:Q9SXP7"/>
<dbReference type="Proteomes" id="UP000006548">
    <property type="component" value="Chromosome 1"/>
</dbReference>
<dbReference type="ExpressionAtlas" id="Q9SXP7">
    <property type="expression patterns" value="baseline and differential"/>
</dbReference>
<dbReference type="GO" id="GO:0005576">
    <property type="term" value="C:extracellular region"/>
    <property type="evidence" value="ECO:0007005"/>
    <property type="project" value="TAIR"/>
</dbReference>
<dbReference type="GO" id="GO:0005739">
    <property type="term" value="C:mitochondrion"/>
    <property type="evidence" value="ECO:0000314"/>
    <property type="project" value="TAIR"/>
</dbReference>
<dbReference type="GO" id="GO:0033819">
    <property type="term" value="F:lipoyl(octanoyl) transferase activity"/>
    <property type="evidence" value="ECO:0000314"/>
    <property type="project" value="UniProtKB"/>
</dbReference>
<dbReference type="GO" id="GO:0009249">
    <property type="term" value="P:protein lipoylation"/>
    <property type="evidence" value="ECO:0000314"/>
    <property type="project" value="UniProtKB"/>
</dbReference>
<dbReference type="CDD" id="cd16444">
    <property type="entry name" value="LipB"/>
    <property type="match status" value="1"/>
</dbReference>
<dbReference type="FunFam" id="3.30.930.10:FF:000063">
    <property type="entry name" value="Octanoyltransferase LIP2, mitochondrial"/>
    <property type="match status" value="1"/>
</dbReference>
<dbReference type="Gene3D" id="3.30.930.10">
    <property type="entry name" value="Bira Bifunctional Protein, Domain 2"/>
    <property type="match status" value="1"/>
</dbReference>
<dbReference type="HAMAP" id="MF_00013">
    <property type="entry name" value="LipB"/>
    <property type="match status" value="1"/>
</dbReference>
<dbReference type="InterPro" id="IPR045864">
    <property type="entry name" value="aa-tRNA-synth_II/BPL/LPL"/>
</dbReference>
<dbReference type="InterPro" id="IPR004143">
    <property type="entry name" value="BPL_LPL_catalytic"/>
</dbReference>
<dbReference type="InterPro" id="IPR000544">
    <property type="entry name" value="Octanoyltransferase"/>
</dbReference>
<dbReference type="InterPro" id="IPR020605">
    <property type="entry name" value="Octanoyltransferase_CS"/>
</dbReference>
<dbReference type="NCBIfam" id="TIGR00214">
    <property type="entry name" value="lipB"/>
    <property type="match status" value="1"/>
</dbReference>
<dbReference type="NCBIfam" id="NF010925">
    <property type="entry name" value="PRK14345.1"/>
    <property type="match status" value="1"/>
</dbReference>
<dbReference type="PANTHER" id="PTHR10993">
    <property type="entry name" value="OCTANOYLTRANSFERASE"/>
    <property type="match status" value="1"/>
</dbReference>
<dbReference type="PANTHER" id="PTHR10993:SF15">
    <property type="entry name" value="OCTANOYLTRANSFERASE LIP2, MITOCHONDRIAL"/>
    <property type="match status" value="1"/>
</dbReference>
<dbReference type="Pfam" id="PF21948">
    <property type="entry name" value="LplA-B_cat"/>
    <property type="match status" value="1"/>
</dbReference>
<dbReference type="PIRSF" id="PIRSF016262">
    <property type="entry name" value="LPLase"/>
    <property type="match status" value="1"/>
</dbReference>
<dbReference type="SUPFAM" id="SSF55681">
    <property type="entry name" value="Class II aaRS and biotin synthetases"/>
    <property type="match status" value="1"/>
</dbReference>
<dbReference type="PROSITE" id="PS51733">
    <property type="entry name" value="BPL_LPL_CATALYTIC"/>
    <property type="match status" value="1"/>
</dbReference>
<dbReference type="PROSITE" id="PS01313">
    <property type="entry name" value="LIPB"/>
    <property type="match status" value="1"/>
</dbReference>
<reference key="1">
    <citation type="journal article" date="2001" name="Plant Cell Physiol.">
        <title>Lipoic acid metabolism in Arabidopsis thaliana: cloning and characterization of a cDNA encoding lipoyltransferase.</title>
        <authorList>
            <person name="Wada M."/>
            <person name="Yasuno R."/>
            <person name="Jordan S.W."/>
            <person name="Cronan J.E. Jr."/>
            <person name="Wada H."/>
        </authorList>
    </citation>
    <scope>NUCLEOTIDE SEQUENCE [MRNA]</scope>
    <scope>FUNCTION</scope>
    <scope>CATALYTIC ACTIVITY</scope>
    <scope>TISSUE SPECIFICITY</scope>
</reference>
<reference key="2">
    <citation type="journal article" date="2000" name="Nature">
        <title>Sequence and analysis of chromosome 1 of the plant Arabidopsis thaliana.</title>
        <authorList>
            <person name="Theologis A."/>
            <person name="Ecker J.R."/>
            <person name="Palm C.J."/>
            <person name="Federspiel N.A."/>
            <person name="Kaul S."/>
            <person name="White O."/>
            <person name="Alonso J."/>
            <person name="Altafi H."/>
            <person name="Araujo R."/>
            <person name="Bowman C.L."/>
            <person name="Brooks S.Y."/>
            <person name="Buehler E."/>
            <person name="Chan A."/>
            <person name="Chao Q."/>
            <person name="Chen H."/>
            <person name="Cheuk R.F."/>
            <person name="Chin C.W."/>
            <person name="Chung M.K."/>
            <person name="Conn L."/>
            <person name="Conway A.B."/>
            <person name="Conway A.R."/>
            <person name="Creasy T.H."/>
            <person name="Dewar K."/>
            <person name="Dunn P."/>
            <person name="Etgu P."/>
            <person name="Feldblyum T.V."/>
            <person name="Feng J.-D."/>
            <person name="Fong B."/>
            <person name="Fujii C.Y."/>
            <person name="Gill J.E."/>
            <person name="Goldsmith A.D."/>
            <person name="Haas B."/>
            <person name="Hansen N.F."/>
            <person name="Hughes B."/>
            <person name="Huizar L."/>
            <person name="Hunter J.L."/>
            <person name="Jenkins J."/>
            <person name="Johnson-Hopson C."/>
            <person name="Khan S."/>
            <person name="Khaykin E."/>
            <person name="Kim C.J."/>
            <person name="Koo H.L."/>
            <person name="Kremenetskaia I."/>
            <person name="Kurtz D.B."/>
            <person name="Kwan A."/>
            <person name="Lam B."/>
            <person name="Langin-Hooper S."/>
            <person name="Lee A."/>
            <person name="Lee J.M."/>
            <person name="Lenz C.A."/>
            <person name="Li J.H."/>
            <person name="Li Y.-P."/>
            <person name="Lin X."/>
            <person name="Liu S.X."/>
            <person name="Liu Z.A."/>
            <person name="Luros J.S."/>
            <person name="Maiti R."/>
            <person name="Marziali A."/>
            <person name="Militscher J."/>
            <person name="Miranda M."/>
            <person name="Nguyen M."/>
            <person name="Nierman W.C."/>
            <person name="Osborne B.I."/>
            <person name="Pai G."/>
            <person name="Peterson J."/>
            <person name="Pham P.K."/>
            <person name="Rizzo M."/>
            <person name="Rooney T."/>
            <person name="Rowley D."/>
            <person name="Sakano H."/>
            <person name="Salzberg S.L."/>
            <person name="Schwartz J.R."/>
            <person name="Shinn P."/>
            <person name="Southwick A.M."/>
            <person name="Sun H."/>
            <person name="Tallon L.J."/>
            <person name="Tambunga G."/>
            <person name="Toriumi M.J."/>
            <person name="Town C.D."/>
            <person name="Utterback T."/>
            <person name="Van Aken S."/>
            <person name="Vaysberg M."/>
            <person name="Vysotskaia V.S."/>
            <person name="Walker M."/>
            <person name="Wu D."/>
            <person name="Yu G."/>
            <person name="Fraser C.M."/>
            <person name="Venter J.C."/>
            <person name="Davis R.W."/>
        </authorList>
    </citation>
    <scope>NUCLEOTIDE SEQUENCE [LARGE SCALE GENOMIC DNA]</scope>
    <source>
        <strain>cv. Columbia</strain>
    </source>
</reference>
<reference key="3">
    <citation type="journal article" date="2017" name="Plant J.">
        <title>Araport11: a complete reannotation of the Arabidopsis thaliana reference genome.</title>
        <authorList>
            <person name="Cheng C.Y."/>
            <person name="Krishnakumar V."/>
            <person name="Chan A.P."/>
            <person name="Thibaud-Nissen F."/>
            <person name="Schobel S."/>
            <person name="Town C.D."/>
        </authorList>
    </citation>
    <scope>GENOME REANNOTATION</scope>
    <source>
        <strain>cv. Columbia</strain>
    </source>
</reference>
<reference key="4">
    <citation type="journal article" date="2003" name="Science">
        <title>Empirical analysis of transcriptional activity in the Arabidopsis genome.</title>
        <authorList>
            <person name="Yamada K."/>
            <person name="Lim J."/>
            <person name="Dale J.M."/>
            <person name="Chen H."/>
            <person name="Shinn P."/>
            <person name="Palm C.J."/>
            <person name="Southwick A.M."/>
            <person name="Wu H.C."/>
            <person name="Kim C.J."/>
            <person name="Nguyen M."/>
            <person name="Pham P.K."/>
            <person name="Cheuk R.F."/>
            <person name="Karlin-Newmann G."/>
            <person name="Liu S.X."/>
            <person name="Lam B."/>
            <person name="Sakano H."/>
            <person name="Wu T."/>
            <person name="Yu G."/>
            <person name="Miranda M."/>
            <person name="Quach H.L."/>
            <person name="Tripp M."/>
            <person name="Chang C.H."/>
            <person name="Lee J.M."/>
            <person name="Toriumi M.J."/>
            <person name="Chan M.M."/>
            <person name="Tang C.C."/>
            <person name="Onodera C.S."/>
            <person name="Deng J.M."/>
            <person name="Akiyama K."/>
            <person name="Ansari Y."/>
            <person name="Arakawa T."/>
            <person name="Banh J."/>
            <person name="Banno F."/>
            <person name="Bowser L."/>
            <person name="Brooks S.Y."/>
            <person name="Carninci P."/>
            <person name="Chao Q."/>
            <person name="Choy N."/>
            <person name="Enju A."/>
            <person name="Goldsmith A.D."/>
            <person name="Gurjal M."/>
            <person name="Hansen N.F."/>
            <person name="Hayashizaki Y."/>
            <person name="Johnson-Hopson C."/>
            <person name="Hsuan V.W."/>
            <person name="Iida K."/>
            <person name="Karnes M."/>
            <person name="Khan S."/>
            <person name="Koesema E."/>
            <person name="Ishida J."/>
            <person name="Jiang P.X."/>
            <person name="Jones T."/>
            <person name="Kawai J."/>
            <person name="Kamiya A."/>
            <person name="Meyers C."/>
            <person name="Nakajima M."/>
            <person name="Narusaka M."/>
            <person name="Seki M."/>
            <person name="Sakurai T."/>
            <person name="Satou M."/>
            <person name="Tamse R."/>
            <person name="Vaysberg M."/>
            <person name="Wallender E.K."/>
            <person name="Wong C."/>
            <person name="Yamamura Y."/>
            <person name="Yuan S."/>
            <person name="Shinozaki K."/>
            <person name="Davis R.W."/>
            <person name="Theologis A."/>
            <person name="Ecker J.R."/>
        </authorList>
    </citation>
    <scope>NUCLEOTIDE SEQUENCE [LARGE SCALE MRNA]</scope>
    <source>
        <strain>cv. Columbia</strain>
    </source>
</reference>
<reference key="5">
    <citation type="journal article" date="2014" name="Plant Physiol.">
        <title>Lipoate-protein ligase and octanoyltransferase are essential for protein lipoylation in mitochondria of Arabidopsis.</title>
        <authorList>
            <person name="Ewald R."/>
            <person name="Hoffmann C."/>
            <person name="Florian A."/>
            <person name="Neuhaus E."/>
            <person name="Fernie A.R."/>
            <person name="Bauwe H."/>
        </authorList>
    </citation>
    <scope>FUNCTION</scope>
    <scope>SUBCELLULAR LOCATION</scope>
    <scope>TISSUE SPECIFICITY</scope>
    <scope>DISRUPTION PHENOTYPE</scope>
</reference>
<proteinExistence type="evidence at protein level"/>